<evidence type="ECO:0000250" key="1"/>
<evidence type="ECO:0000250" key="2">
    <source>
        <dbReference type="UniProtKB" id="Q9H6H4"/>
    </source>
</evidence>
<evidence type="ECO:0000255" key="3"/>
<evidence type="ECO:0000256" key="4">
    <source>
        <dbReference type="SAM" id="MobiDB-lite"/>
    </source>
</evidence>
<evidence type="ECO:0000305" key="5"/>
<evidence type="ECO:0007744" key="6">
    <source>
    </source>
</evidence>
<evidence type="ECO:0007744" key="7">
    <source>
    </source>
</evidence>
<name>REEP4_MOUSE</name>
<feature type="chain" id="PRO_0000101831" description="Receptor expression-enhancing protein 4">
    <location>
        <begin position="1"/>
        <end position="257"/>
    </location>
</feature>
<feature type="transmembrane region" description="Helical" evidence="3">
    <location>
        <begin position="1"/>
        <end position="21"/>
    </location>
</feature>
<feature type="transmembrane region" description="Helical" evidence="3">
    <location>
        <begin position="42"/>
        <end position="62"/>
    </location>
</feature>
<feature type="region of interest" description="Disordered" evidence="4">
    <location>
        <begin position="177"/>
        <end position="257"/>
    </location>
</feature>
<feature type="modified residue" description="Phosphoserine" evidence="6">
    <location>
        <position position="152"/>
    </location>
</feature>
<feature type="modified residue" description="Phosphoserine" evidence="7">
    <location>
        <position position="194"/>
    </location>
</feature>
<feature type="modified residue" description="Phosphothreonine" evidence="7">
    <location>
        <position position="196"/>
    </location>
</feature>
<feature type="modified residue" description="Phosphoserine" evidence="7">
    <location>
        <position position="202"/>
    </location>
</feature>
<feature type="modified residue" description="Phosphoserine" evidence="2">
    <location>
        <position position="253"/>
    </location>
</feature>
<comment type="function">
    <text evidence="1">Microtubule-binding protein required to ensure proper cell division and nuclear envelope reassembly by sequestering the endoplasmic reticulum away from chromosomes during mitosis. Probably acts by clearing the endoplasmic reticulum membrane from metaphase chromosomes (By similarity).</text>
</comment>
<comment type="subcellular location">
    <subcellularLocation>
        <location evidence="1">Endoplasmic reticulum membrane</location>
        <topology evidence="1">Multi-pass membrane protein</topology>
    </subcellularLocation>
</comment>
<comment type="similarity">
    <text evidence="5">Belongs to the DP1 family.</text>
</comment>
<gene>
    <name type="primary">Reep4</name>
</gene>
<keyword id="KW-0131">Cell cycle</keyword>
<keyword id="KW-0132">Cell division</keyword>
<keyword id="KW-0256">Endoplasmic reticulum</keyword>
<keyword id="KW-0472">Membrane</keyword>
<keyword id="KW-0493">Microtubule</keyword>
<keyword id="KW-0498">Mitosis</keyword>
<keyword id="KW-0597">Phosphoprotein</keyword>
<keyword id="KW-1185">Reference proteome</keyword>
<keyword id="KW-0812">Transmembrane</keyword>
<keyword id="KW-1133">Transmembrane helix</keyword>
<proteinExistence type="evidence at protein level"/>
<dbReference type="EMBL" id="AY562232">
    <property type="protein sequence ID" value="AAT70677.1"/>
    <property type="molecule type" value="mRNA"/>
</dbReference>
<dbReference type="EMBL" id="BC033929">
    <property type="protein sequence ID" value="AAH33929.1"/>
    <property type="molecule type" value="mRNA"/>
</dbReference>
<dbReference type="CCDS" id="CCDS27256.1"/>
<dbReference type="RefSeq" id="NP_850919.1">
    <property type="nucleotide sequence ID" value="NM_180588.2"/>
</dbReference>
<dbReference type="BioGRID" id="215431">
    <property type="interactions" value="1"/>
</dbReference>
<dbReference type="FunCoup" id="Q8K072">
    <property type="interactions" value="408"/>
</dbReference>
<dbReference type="STRING" id="10090.ENSMUSP00000040162"/>
<dbReference type="iPTMnet" id="Q8K072"/>
<dbReference type="PhosphoSitePlus" id="Q8K072"/>
<dbReference type="jPOST" id="Q8K072"/>
<dbReference type="PaxDb" id="10090-ENSMUSP00000040162"/>
<dbReference type="PeptideAtlas" id="Q8K072"/>
<dbReference type="ProteomicsDB" id="255008"/>
<dbReference type="Pumba" id="Q8K072"/>
<dbReference type="Antibodypedia" id="22523">
    <property type="antibodies" value="138 antibodies from 23 providers"/>
</dbReference>
<dbReference type="DNASU" id="72549"/>
<dbReference type="Ensembl" id="ENSMUST00000047218.5">
    <property type="protein sequence ID" value="ENSMUSP00000040162.4"/>
    <property type="gene ID" value="ENSMUSG00000033589.5"/>
</dbReference>
<dbReference type="GeneID" id="72549"/>
<dbReference type="KEGG" id="mmu:72549"/>
<dbReference type="UCSC" id="uc007uoi.2">
    <property type="organism name" value="mouse"/>
</dbReference>
<dbReference type="AGR" id="MGI:1919799"/>
<dbReference type="CTD" id="80346"/>
<dbReference type="MGI" id="MGI:1919799">
    <property type="gene designation" value="Reep4"/>
</dbReference>
<dbReference type="VEuPathDB" id="HostDB:ENSMUSG00000033589"/>
<dbReference type="eggNOG" id="KOG1726">
    <property type="taxonomic scope" value="Eukaryota"/>
</dbReference>
<dbReference type="GeneTree" id="ENSGT00940000161674"/>
<dbReference type="HOGENOM" id="CLU_028431_0_1_1"/>
<dbReference type="InParanoid" id="Q8K072"/>
<dbReference type="OrthoDB" id="434647at2759"/>
<dbReference type="PhylomeDB" id="Q8K072"/>
<dbReference type="TreeFam" id="TF314177"/>
<dbReference type="BioGRID-ORCS" id="72549">
    <property type="hits" value="2 hits in 77 CRISPR screens"/>
</dbReference>
<dbReference type="ChiTaRS" id="Reep4">
    <property type="organism name" value="mouse"/>
</dbReference>
<dbReference type="PRO" id="PR:Q8K072"/>
<dbReference type="Proteomes" id="UP000000589">
    <property type="component" value="Chromosome 14"/>
</dbReference>
<dbReference type="RNAct" id="Q8K072">
    <property type="molecule type" value="protein"/>
</dbReference>
<dbReference type="Bgee" id="ENSMUSG00000033589">
    <property type="expression patterns" value="Expressed in lip and 158 other cell types or tissues"/>
</dbReference>
<dbReference type="ExpressionAtlas" id="Q8K072">
    <property type="expression patterns" value="baseline and differential"/>
</dbReference>
<dbReference type="GO" id="GO:0005783">
    <property type="term" value="C:endoplasmic reticulum"/>
    <property type="evidence" value="ECO:0000250"/>
    <property type="project" value="UniProtKB"/>
</dbReference>
<dbReference type="GO" id="GO:0005789">
    <property type="term" value="C:endoplasmic reticulum membrane"/>
    <property type="evidence" value="ECO:0007669"/>
    <property type="project" value="UniProtKB-SubCell"/>
</dbReference>
<dbReference type="GO" id="GO:0005874">
    <property type="term" value="C:microtubule"/>
    <property type="evidence" value="ECO:0007669"/>
    <property type="project" value="UniProtKB-KW"/>
</dbReference>
<dbReference type="GO" id="GO:0008017">
    <property type="term" value="F:microtubule binding"/>
    <property type="evidence" value="ECO:0000250"/>
    <property type="project" value="UniProtKB"/>
</dbReference>
<dbReference type="GO" id="GO:0051301">
    <property type="term" value="P:cell division"/>
    <property type="evidence" value="ECO:0007669"/>
    <property type="project" value="UniProtKB-KW"/>
</dbReference>
<dbReference type="GO" id="GO:0007084">
    <property type="term" value="P:mitotic nuclear membrane reassembly"/>
    <property type="evidence" value="ECO:0000250"/>
    <property type="project" value="UniProtKB"/>
</dbReference>
<dbReference type="GO" id="GO:0006998">
    <property type="term" value="P:nuclear envelope organization"/>
    <property type="evidence" value="ECO:0000250"/>
    <property type="project" value="UniProtKB"/>
</dbReference>
<dbReference type="InterPro" id="IPR004345">
    <property type="entry name" value="TB2_DP1_HVA22"/>
</dbReference>
<dbReference type="PANTHER" id="PTHR12300">
    <property type="entry name" value="HVA22-LIKE PROTEINS"/>
    <property type="match status" value="1"/>
</dbReference>
<dbReference type="PANTHER" id="PTHR12300:SF36">
    <property type="entry name" value="RECEPTOR EXPRESSION-ENHANCING PROTEIN 4"/>
    <property type="match status" value="1"/>
</dbReference>
<dbReference type="Pfam" id="PF03134">
    <property type="entry name" value="TB2_DP1_HVA22"/>
    <property type="match status" value="1"/>
</dbReference>
<reference key="1">
    <citation type="journal article" date="2004" name="Cell">
        <title>RTP family members induce functional expression of mammalian odorant receptors.</title>
        <authorList>
            <person name="Saito H."/>
            <person name="Kubota M."/>
            <person name="Roberts R.W."/>
            <person name="Chi Q."/>
            <person name="Matsunami H."/>
        </authorList>
    </citation>
    <scope>NUCLEOTIDE SEQUENCE [MRNA]</scope>
</reference>
<reference key="2">
    <citation type="journal article" date="2004" name="Genome Res.">
        <title>The status, quality, and expansion of the NIH full-length cDNA project: the Mammalian Gene Collection (MGC).</title>
        <authorList>
            <consortium name="The MGC Project Team"/>
        </authorList>
    </citation>
    <scope>NUCLEOTIDE SEQUENCE [LARGE SCALE MRNA]</scope>
    <source>
        <strain>C57BL/6J</strain>
        <tissue>Thymus</tissue>
    </source>
</reference>
<reference key="3">
    <citation type="journal article" date="2009" name="Immunity">
        <title>The phagosomal proteome in interferon-gamma-activated macrophages.</title>
        <authorList>
            <person name="Trost M."/>
            <person name="English L."/>
            <person name="Lemieux S."/>
            <person name="Courcelles M."/>
            <person name="Desjardins M."/>
            <person name="Thibault P."/>
        </authorList>
    </citation>
    <scope>PHOSPHORYLATION [LARGE SCALE ANALYSIS] AT SER-152</scope>
    <scope>IDENTIFICATION BY MASS SPECTROMETRY [LARGE SCALE ANALYSIS]</scope>
</reference>
<reference key="4">
    <citation type="journal article" date="2010" name="Cell">
        <title>A tissue-specific atlas of mouse protein phosphorylation and expression.</title>
        <authorList>
            <person name="Huttlin E.L."/>
            <person name="Jedrychowski M.P."/>
            <person name="Elias J.E."/>
            <person name="Goswami T."/>
            <person name="Rad R."/>
            <person name="Beausoleil S.A."/>
            <person name="Villen J."/>
            <person name="Haas W."/>
            <person name="Sowa M.E."/>
            <person name="Gygi S.P."/>
        </authorList>
    </citation>
    <scope>PHOSPHORYLATION [LARGE SCALE ANALYSIS] AT SER-194; THR-196 AND SER-202</scope>
    <scope>IDENTIFICATION BY MASS SPECTROMETRY [LARGE SCALE ANALYSIS]</scope>
    <source>
        <tissue>Lung</tissue>
        <tissue>Pancreas</tissue>
        <tissue>Spleen</tissue>
        <tissue>Testis</tissue>
    </source>
</reference>
<accession>Q8K072</accession>
<sequence length="257" mass="29691">MVSWMICRLVVLIFGMLYPAYASYKAVKSKNIREYVRWMMYWIVFAIFMAAETFTDIFISWFPFYYEFKMAFVLWLLSPYTKGASLLYRKFVHPSLSRHEKEIDACIVQAKERSYETMLSFGKRSLNIAASAAVQAATKSQGALAGRLRSFSMQDLRSIPDTPVPTYQDPLYLEDQVPRRRPPIGYRPGGLQGSDTEDECWSDNEIVPQPPVRPREKPLGRSQSLRVVKRKPLTREGTSRSLKVRTRKKAMPSDMDS</sequence>
<protein>
    <recommendedName>
        <fullName>Receptor expression-enhancing protein 4</fullName>
    </recommendedName>
</protein>
<organism>
    <name type="scientific">Mus musculus</name>
    <name type="common">Mouse</name>
    <dbReference type="NCBI Taxonomy" id="10090"/>
    <lineage>
        <taxon>Eukaryota</taxon>
        <taxon>Metazoa</taxon>
        <taxon>Chordata</taxon>
        <taxon>Craniata</taxon>
        <taxon>Vertebrata</taxon>
        <taxon>Euteleostomi</taxon>
        <taxon>Mammalia</taxon>
        <taxon>Eutheria</taxon>
        <taxon>Euarchontoglires</taxon>
        <taxon>Glires</taxon>
        <taxon>Rodentia</taxon>
        <taxon>Myomorpha</taxon>
        <taxon>Muroidea</taxon>
        <taxon>Muridae</taxon>
        <taxon>Murinae</taxon>
        <taxon>Mus</taxon>
        <taxon>Mus</taxon>
    </lineage>
</organism>